<dbReference type="EC" id="3.2.2.9" evidence="1"/>
<dbReference type="EMBL" id="CP000002">
    <property type="protein sequence ID" value="AAU24361.1"/>
    <property type="molecule type" value="Genomic_DNA"/>
</dbReference>
<dbReference type="EMBL" id="AE017333">
    <property type="protein sequence ID" value="AAU41725.1"/>
    <property type="molecule type" value="Genomic_DNA"/>
</dbReference>
<dbReference type="RefSeq" id="WP_009327797.1">
    <property type="nucleotide sequence ID" value="NC_006322.1"/>
</dbReference>
<dbReference type="SMR" id="Q65GT9"/>
<dbReference type="STRING" id="279010.BL02020"/>
<dbReference type="GeneID" id="92860551"/>
<dbReference type="KEGG" id="bld:BLi02855"/>
<dbReference type="KEGG" id="bli:BL02020"/>
<dbReference type="eggNOG" id="COG0775">
    <property type="taxonomic scope" value="Bacteria"/>
</dbReference>
<dbReference type="HOGENOM" id="CLU_031248_2_2_9"/>
<dbReference type="UniPathway" id="UPA00904">
    <property type="reaction ID" value="UER00871"/>
</dbReference>
<dbReference type="Proteomes" id="UP000000606">
    <property type="component" value="Chromosome"/>
</dbReference>
<dbReference type="GO" id="GO:0005829">
    <property type="term" value="C:cytosol"/>
    <property type="evidence" value="ECO:0007669"/>
    <property type="project" value="TreeGrafter"/>
</dbReference>
<dbReference type="GO" id="GO:0008782">
    <property type="term" value="F:adenosylhomocysteine nucleosidase activity"/>
    <property type="evidence" value="ECO:0007669"/>
    <property type="project" value="UniProtKB-UniRule"/>
</dbReference>
<dbReference type="GO" id="GO:0008930">
    <property type="term" value="F:methylthioadenosine nucleosidase activity"/>
    <property type="evidence" value="ECO:0007669"/>
    <property type="project" value="UniProtKB-UniRule"/>
</dbReference>
<dbReference type="GO" id="GO:0019509">
    <property type="term" value="P:L-methionine salvage from methylthioadenosine"/>
    <property type="evidence" value="ECO:0007669"/>
    <property type="project" value="UniProtKB-UniRule"/>
</dbReference>
<dbReference type="GO" id="GO:0019284">
    <property type="term" value="P:L-methionine salvage from S-adenosylmethionine"/>
    <property type="evidence" value="ECO:0007669"/>
    <property type="project" value="TreeGrafter"/>
</dbReference>
<dbReference type="GO" id="GO:0009164">
    <property type="term" value="P:nucleoside catabolic process"/>
    <property type="evidence" value="ECO:0007669"/>
    <property type="project" value="InterPro"/>
</dbReference>
<dbReference type="CDD" id="cd09008">
    <property type="entry name" value="MTAN"/>
    <property type="match status" value="1"/>
</dbReference>
<dbReference type="FunFam" id="3.40.50.1580:FF:000001">
    <property type="entry name" value="MTA/SAH nucleosidase family protein"/>
    <property type="match status" value="1"/>
</dbReference>
<dbReference type="Gene3D" id="3.40.50.1580">
    <property type="entry name" value="Nucleoside phosphorylase domain"/>
    <property type="match status" value="1"/>
</dbReference>
<dbReference type="HAMAP" id="MF_01684">
    <property type="entry name" value="Salvage_MtnN"/>
    <property type="match status" value="1"/>
</dbReference>
<dbReference type="InterPro" id="IPR010049">
    <property type="entry name" value="MTA_SAH_Nsdase"/>
</dbReference>
<dbReference type="InterPro" id="IPR000845">
    <property type="entry name" value="Nucleoside_phosphorylase_d"/>
</dbReference>
<dbReference type="InterPro" id="IPR035994">
    <property type="entry name" value="Nucleoside_phosphorylase_sf"/>
</dbReference>
<dbReference type="NCBIfam" id="TIGR01704">
    <property type="entry name" value="MTA_SAH-Nsdase"/>
    <property type="match status" value="1"/>
</dbReference>
<dbReference type="NCBIfam" id="NF004079">
    <property type="entry name" value="PRK05584.1"/>
    <property type="match status" value="1"/>
</dbReference>
<dbReference type="PANTHER" id="PTHR46832">
    <property type="entry name" value="5'-METHYLTHIOADENOSINE/S-ADENOSYLHOMOCYSTEINE NUCLEOSIDASE"/>
    <property type="match status" value="1"/>
</dbReference>
<dbReference type="PANTHER" id="PTHR46832:SF1">
    <property type="entry name" value="5'-METHYLTHIOADENOSINE_S-ADENOSYLHOMOCYSTEINE NUCLEOSIDASE"/>
    <property type="match status" value="1"/>
</dbReference>
<dbReference type="Pfam" id="PF01048">
    <property type="entry name" value="PNP_UDP_1"/>
    <property type="match status" value="1"/>
</dbReference>
<dbReference type="SUPFAM" id="SSF53167">
    <property type="entry name" value="Purine and uridine phosphorylases"/>
    <property type="match status" value="1"/>
</dbReference>
<comment type="function">
    <text evidence="1">Catalyzes the irreversible cleavage of the glycosidic bond in both 5'-methylthioadenosine (MTA) and S-adenosylhomocysteine (SAH/AdoHcy) to adenine and the corresponding thioribose, 5'-methylthioribose and S-ribosylhomocysteine, respectively. Also cleaves 5'-deoxyadenosine, a toxic by-product of radical S-adenosylmethionine (SAM) enzymes, into 5-deoxyribose and adenine.</text>
</comment>
<comment type="catalytic activity">
    <reaction evidence="1">
        <text>S-adenosyl-L-homocysteine + H2O = S-(5-deoxy-D-ribos-5-yl)-L-homocysteine + adenine</text>
        <dbReference type="Rhea" id="RHEA:17805"/>
        <dbReference type="ChEBI" id="CHEBI:15377"/>
        <dbReference type="ChEBI" id="CHEBI:16708"/>
        <dbReference type="ChEBI" id="CHEBI:57856"/>
        <dbReference type="ChEBI" id="CHEBI:58195"/>
        <dbReference type="EC" id="3.2.2.9"/>
    </reaction>
</comment>
<comment type="catalytic activity">
    <reaction evidence="1">
        <text>S-methyl-5'-thioadenosine + H2O = 5-(methylsulfanyl)-D-ribose + adenine</text>
        <dbReference type="Rhea" id="RHEA:13617"/>
        <dbReference type="ChEBI" id="CHEBI:15377"/>
        <dbReference type="ChEBI" id="CHEBI:16708"/>
        <dbReference type="ChEBI" id="CHEBI:17509"/>
        <dbReference type="ChEBI" id="CHEBI:78440"/>
        <dbReference type="EC" id="3.2.2.9"/>
    </reaction>
</comment>
<comment type="catalytic activity">
    <reaction evidence="1">
        <text>5'-deoxyadenosine + H2O = 5-deoxy-D-ribose + adenine</text>
        <dbReference type="Rhea" id="RHEA:29859"/>
        <dbReference type="ChEBI" id="CHEBI:15377"/>
        <dbReference type="ChEBI" id="CHEBI:16708"/>
        <dbReference type="ChEBI" id="CHEBI:17319"/>
        <dbReference type="ChEBI" id="CHEBI:149540"/>
        <dbReference type="EC" id="3.2.2.9"/>
    </reaction>
    <physiologicalReaction direction="left-to-right" evidence="1">
        <dbReference type="Rhea" id="RHEA:29860"/>
    </physiologicalReaction>
</comment>
<comment type="pathway">
    <text evidence="1">Amino-acid biosynthesis; L-methionine biosynthesis via salvage pathway; S-methyl-5-thio-alpha-D-ribose 1-phosphate from S-methyl-5'-thioadenosine (hydrolase route): step 1/2.</text>
</comment>
<comment type="similarity">
    <text evidence="1">Belongs to the PNP/UDP phosphorylase family. MtnN subfamily.</text>
</comment>
<name>MTNN_BACLD</name>
<evidence type="ECO:0000255" key="1">
    <source>
        <dbReference type="HAMAP-Rule" id="MF_01684"/>
    </source>
</evidence>
<protein>
    <recommendedName>
        <fullName evidence="1">5'-methylthioadenosine/S-adenosylhomocysteine nucleosidase</fullName>
        <shortName evidence="1">MTA/SAH nucleosidase</shortName>
        <shortName evidence="1">MTAN</shortName>
        <ecNumber evidence="1">3.2.2.9</ecNumber>
    </recommendedName>
    <alternativeName>
        <fullName evidence="1">5'-deoxyadenosine nucleosidase</fullName>
        <shortName evidence="1">DOA nucleosidase</shortName>
        <shortName evidence="1">dAdo nucleosidase</shortName>
    </alternativeName>
    <alternativeName>
        <fullName evidence="1">5'-methylthioadenosine nucleosidase</fullName>
        <shortName evidence="1">MTA nucleosidase</shortName>
    </alternativeName>
    <alternativeName>
        <fullName evidence="1">S-adenosylhomocysteine nucleosidase</fullName>
        <shortName evidence="1">AdoHcy nucleosidase</shortName>
        <shortName evidence="1">SAH nucleosidase</shortName>
        <shortName evidence="1">SRH nucleosidase</shortName>
    </alternativeName>
</protein>
<feature type="chain" id="PRO_0000359279" description="5'-methylthioadenosine/S-adenosylhomocysteine nucleosidase">
    <location>
        <begin position="1"/>
        <end position="231"/>
    </location>
</feature>
<feature type="active site" description="Proton acceptor" evidence="1">
    <location>
        <position position="12"/>
    </location>
</feature>
<feature type="active site" description="Proton donor" evidence="1">
    <location>
        <position position="198"/>
    </location>
</feature>
<feature type="binding site" evidence="1">
    <location>
        <position position="78"/>
    </location>
    <ligand>
        <name>substrate</name>
    </ligand>
</feature>
<feature type="binding site" evidence="1">
    <location>
        <position position="153"/>
    </location>
    <ligand>
        <name>substrate</name>
    </ligand>
</feature>
<feature type="binding site" evidence="1">
    <location>
        <begin position="174"/>
        <end position="175"/>
    </location>
    <ligand>
        <name>substrate</name>
    </ligand>
</feature>
<organism>
    <name type="scientific">Bacillus licheniformis (strain ATCC 14580 / DSM 13 / JCM 2505 / CCUG 7422 / NBRC 12200 / NCIMB 9375 / NCTC 10341 / NRRL NRS-1264 / Gibson 46)</name>
    <dbReference type="NCBI Taxonomy" id="279010"/>
    <lineage>
        <taxon>Bacteria</taxon>
        <taxon>Bacillati</taxon>
        <taxon>Bacillota</taxon>
        <taxon>Bacilli</taxon>
        <taxon>Bacillales</taxon>
        <taxon>Bacillaceae</taxon>
        <taxon>Bacillus</taxon>
    </lineage>
</organism>
<accession>Q65GT9</accession>
<accession>Q62S98</accession>
<gene>
    <name evidence="1" type="primary">mtnN</name>
    <name type="ordered locus">BLi02855</name>
    <name type="ordered locus">BL02020</name>
</gene>
<keyword id="KW-0028">Amino-acid biosynthesis</keyword>
<keyword id="KW-0378">Hydrolase</keyword>
<keyword id="KW-0486">Methionine biosynthesis</keyword>
<keyword id="KW-1185">Reference proteome</keyword>
<reference key="1">
    <citation type="journal article" date="2004" name="J. Mol. Microbiol. Biotechnol.">
        <title>The complete genome sequence of Bacillus licheniformis DSM13, an organism with great industrial potential.</title>
        <authorList>
            <person name="Veith B."/>
            <person name="Herzberg C."/>
            <person name="Steckel S."/>
            <person name="Feesche J."/>
            <person name="Maurer K.H."/>
            <person name="Ehrenreich P."/>
            <person name="Baeumer S."/>
            <person name="Henne A."/>
            <person name="Liesegang H."/>
            <person name="Merkl R."/>
            <person name="Ehrenreich A."/>
            <person name="Gottschalk G."/>
        </authorList>
    </citation>
    <scope>NUCLEOTIDE SEQUENCE [LARGE SCALE GENOMIC DNA]</scope>
    <source>
        <strain>ATCC 14580 / DSM 13 / JCM 2505 / CCUG 7422 / NBRC 12200 / NCIMB 9375 / NCTC 10341 / NRRL NRS-1264 / Gibson 46</strain>
    </source>
</reference>
<reference key="2">
    <citation type="journal article" date="2004" name="Genome Biol.">
        <title>Complete genome sequence of the industrial bacterium Bacillus licheniformis and comparisons with closely related Bacillus species.</title>
        <authorList>
            <person name="Rey M.W."/>
            <person name="Ramaiya P."/>
            <person name="Nelson B.A."/>
            <person name="Brody-Karpin S.D."/>
            <person name="Zaretsky E.J."/>
            <person name="Tang M."/>
            <person name="Lopez de Leon A."/>
            <person name="Xiang H."/>
            <person name="Gusti V."/>
            <person name="Clausen I.G."/>
            <person name="Olsen P.B."/>
            <person name="Rasmussen M.D."/>
            <person name="Andersen J.T."/>
            <person name="Joergensen P.L."/>
            <person name="Larsen T.S."/>
            <person name="Sorokin A."/>
            <person name="Bolotin A."/>
            <person name="Lapidus A."/>
            <person name="Galleron N."/>
            <person name="Ehrlich S.D."/>
            <person name="Berka R.M."/>
        </authorList>
    </citation>
    <scope>NUCLEOTIDE SEQUENCE [LARGE SCALE GENOMIC DNA]</scope>
    <source>
        <strain>ATCC 14580 / DSM 13 / JCM 2505 / CCUG 7422 / NBRC 12200 / NCIMB 9375 / NCTC 10341 / NRRL NRS-1264 / Gibson 46</strain>
    </source>
</reference>
<proteinExistence type="inferred from homology"/>
<sequence>MKIAVIGAMEEEVTILRSKLEQTNREVIANCEFTSGFYEGKEVVLLKSGIGKVNAAMSTTILLDRFKPDVVINTGSAGGFHHSLNVGDIVISTEVRHHDVDVTAFDYEYGQVPNLPAAYKADNALIQAAEDEASELGHIQVVKGTIATGDSFMSDPDRVAFIRGKFEDLYAVEMEAAAVAQVSYQFNTPFVVIRALSDIAGKESEISFDQFLEQAAKHSTDLVLRMIKRIN</sequence>